<organism>
    <name type="scientific">Escherichia fergusonii (strain ATCC 35469 / DSM 13698 / CCUG 18766 / IAM 14443 / JCM 21226 / LMG 7866 / NBRC 102419 / NCTC 12128 / CDC 0568-73)</name>
    <dbReference type="NCBI Taxonomy" id="585054"/>
    <lineage>
        <taxon>Bacteria</taxon>
        <taxon>Pseudomonadati</taxon>
        <taxon>Pseudomonadota</taxon>
        <taxon>Gammaproteobacteria</taxon>
        <taxon>Enterobacterales</taxon>
        <taxon>Enterobacteriaceae</taxon>
        <taxon>Escherichia</taxon>
    </lineage>
</organism>
<name>YBEY_ESCF3</name>
<accession>B7LKU5</accession>
<dbReference type="EC" id="3.1.-.-" evidence="1"/>
<dbReference type="EMBL" id="CU928158">
    <property type="protein sequence ID" value="CAQ89940.1"/>
    <property type="molecule type" value="Genomic_DNA"/>
</dbReference>
<dbReference type="RefSeq" id="WP_000084469.1">
    <property type="nucleotide sequence ID" value="NC_011740.1"/>
</dbReference>
<dbReference type="SMR" id="B7LKU5"/>
<dbReference type="GeneID" id="93776823"/>
<dbReference type="KEGG" id="efe:EFER_2443"/>
<dbReference type="HOGENOM" id="CLU_106710_0_1_6"/>
<dbReference type="OrthoDB" id="9807740at2"/>
<dbReference type="Proteomes" id="UP000000745">
    <property type="component" value="Chromosome"/>
</dbReference>
<dbReference type="GO" id="GO:0005737">
    <property type="term" value="C:cytoplasm"/>
    <property type="evidence" value="ECO:0007669"/>
    <property type="project" value="UniProtKB-SubCell"/>
</dbReference>
<dbReference type="GO" id="GO:0004222">
    <property type="term" value="F:metalloendopeptidase activity"/>
    <property type="evidence" value="ECO:0007669"/>
    <property type="project" value="InterPro"/>
</dbReference>
<dbReference type="GO" id="GO:0004521">
    <property type="term" value="F:RNA endonuclease activity"/>
    <property type="evidence" value="ECO:0007669"/>
    <property type="project" value="UniProtKB-UniRule"/>
</dbReference>
<dbReference type="GO" id="GO:0008270">
    <property type="term" value="F:zinc ion binding"/>
    <property type="evidence" value="ECO:0007669"/>
    <property type="project" value="UniProtKB-UniRule"/>
</dbReference>
<dbReference type="GO" id="GO:0006364">
    <property type="term" value="P:rRNA processing"/>
    <property type="evidence" value="ECO:0007669"/>
    <property type="project" value="UniProtKB-UniRule"/>
</dbReference>
<dbReference type="FunFam" id="3.40.390.30:FF:000001">
    <property type="entry name" value="Endoribonuclease YbeY"/>
    <property type="match status" value="1"/>
</dbReference>
<dbReference type="Gene3D" id="3.40.390.30">
    <property type="entry name" value="Metalloproteases ('zincins'), catalytic domain"/>
    <property type="match status" value="1"/>
</dbReference>
<dbReference type="HAMAP" id="MF_00009">
    <property type="entry name" value="Endoribonucl_YbeY"/>
    <property type="match status" value="1"/>
</dbReference>
<dbReference type="InterPro" id="IPR023091">
    <property type="entry name" value="MetalPrtase_cat_dom_sf_prd"/>
</dbReference>
<dbReference type="InterPro" id="IPR002036">
    <property type="entry name" value="YbeY"/>
</dbReference>
<dbReference type="InterPro" id="IPR020549">
    <property type="entry name" value="YbeY_CS"/>
</dbReference>
<dbReference type="NCBIfam" id="TIGR00043">
    <property type="entry name" value="rRNA maturation RNase YbeY"/>
    <property type="match status" value="1"/>
</dbReference>
<dbReference type="PANTHER" id="PTHR46986">
    <property type="entry name" value="ENDORIBONUCLEASE YBEY, CHLOROPLASTIC"/>
    <property type="match status" value="1"/>
</dbReference>
<dbReference type="PANTHER" id="PTHR46986:SF1">
    <property type="entry name" value="ENDORIBONUCLEASE YBEY, CHLOROPLASTIC"/>
    <property type="match status" value="1"/>
</dbReference>
<dbReference type="Pfam" id="PF02130">
    <property type="entry name" value="YbeY"/>
    <property type="match status" value="1"/>
</dbReference>
<dbReference type="SUPFAM" id="SSF55486">
    <property type="entry name" value="Metalloproteases ('zincins'), catalytic domain"/>
    <property type="match status" value="1"/>
</dbReference>
<dbReference type="PROSITE" id="PS01306">
    <property type="entry name" value="UPF0054"/>
    <property type="match status" value="1"/>
</dbReference>
<gene>
    <name evidence="1" type="primary">ybeY</name>
    <name type="ordered locus">EFER_2443</name>
</gene>
<sequence length="155" mass="17526">MSQVILDLQLACEDNSGLPEESQFQTWLNAVIPQFQEESEVTIRVVDTAESHSLNLTYRGKDKPTNVLSFPFEVPPGMEMSLLGDLVICRQVVEKEAQEQGKPLEAHWAHMVVHGSLHLLGYDHIEDDEAEEMEALETEIMLALGYEDPYIAEKE</sequence>
<evidence type="ECO:0000255" key="1">
    <source>
        <dbReference type="HAMAP-Rule" id="MF_00009"/>
    </source>
</evidence>
<reference key="1">
    <citation type="journal article" date="2009" name="PLoS Genet.">
        <title>Organised genome dynamics in the Escherichia coli species results in highly diverse adaptive paths.</title>
        <authorList>
            <person name="Touchon M."/>
            <person name="Hoede C."/>
            <person name="Tenaillon O."/>
            <person name="Barbe V."/>
            <person name="Baeriswyl S."/>
            <person name="Bidet P."/>
            <person name="Bingen E."/>
            <person name="Bonacorsi S."/>
            <person name="Bouchier C."/>
            <person name="Bouvet O."/>
            <person name="Calteau A."/>
            <person name="Chiapello H."/>
            <person name="Clermont O."/>
            <person name="Cruveiller S."/>
            <person name="Danchin A."/>
            <person name="Diard M."/>
            <person name="Dossat C."/>
            <person name="Karoui M.E."/>
            <person name="Frapy E."/>
            <person name="Garry L."/>
            <person name="Ghigo J.M."/>
            <person name="Gilles A.M."/>
            <person name="Johnson J."/>
            <person name="Le Bouguenec C."/>
            <person name="Lescat M."/>
            <person name="Mangenot S."/>
            <person name="Martinez-Jehanne V."/>
            <person name="Matic I."/>
            <person name="Nassif X."/>
            <person name="Oztas S."/>
            <person name="Petit M.A."/>
            <person name="Pichon C."/>
            <person name="Rouy Z."/>
            <person name="Ruf C.S."/>
            <person name="Schneider D."/>
            <person name="Tourret J."/>
            <person name="Vacherie B."/>
            <person name="Vallenet D."/>
            <person name="Medigue C."/>
            <person name="Rocha E.P.C."/>
            <person name="Denamur E."/>
        </authorList>
    </citation>
    <scope>NUCLEOTIDE SEQUENCE [LARGE SCALE GENOMIC DNA]</scope>
    <source>
        <strain>ATCC 35469 / DSM 13698 / BCRC 15582 / CCUG 18766 / IAM 14443 / JCM 21226 / LMG 7866 / NBRC 102419 / NCTC 12128 / CDC 0568-73</strain>
    </source>
</reference>
<keyword id="KW-0963">Cytoplasm</keyword>
<keyword id="KW-0255">Endonuclease</keyword>
<keyword id="KW-0378">Hydrolase</keyword>
<keyword id="KW-0479">Metal-binding</keyword>
<keyword id="KW-0540">Nuclease</keyword>
<keyword id="KW-0690">Ribosome biogenesis</keyword>
<keyword id="KW-0698">rRNA processing</keyword>
<keyword id="KW-0862">Zinc</keyword>
<comment type="function">
    <text evidence="1">Single strand-specific metallo-endoribonuclease involved in late-stage 70S ribosome quality control and in maturation of the 3' terminus of the 16S rRNA.</text>
</comment>
<comment type="cofactor">
    <cofactor evidence="1">
        <name>Zn(2+)</name>
        <dbReference type="ChEBI" id="CHEBI:29105"/>
    </cofactor>
    <text evidence="1">Binds 1 zinc ion.</text>
</comment>
<comment type="subcellular location">
    <subcellularLocation>
        <location evidence="1">Cytoplasm</location>
    </subcellularLocation>
</comment>
<comment type="similarity">
    <text evidence="1">Belongs to the endoribonuclease YbeY family.</text>
</comment>
<proteinExistence type="inferred from homology"/>
<feature type="chain" id="PRO_1000199978" description="Endoribonuclease YbeY">
    <location>
        <begin position="1"/>
        <end position="155"/>
    </location>
</feature>
<feature type="binding site" evidence="1">
    <location>
        <position position="114"/>
    </location>
    <ligand>
        <name>Zn(2+)</name>
        <dbReference type="ChEBI" id="CHEBI:29105"/>
        <note>catalytic</note>
    </ligand>
</feature>
<feature type="binding site" evidence="1">
    <location>
        <position position="118"/>
    </location>
    <ligand>
        <name>Zn(2+)</name>
        <dbReference type="ChEBI" id="CHEBI:29105"/>
        <note>catalytic</note>
    </ligand>
</feature>
<feature type="binding site" evidence="1">
    <location>
        <position position="124"/>
    </location>
    <ligand>
        <name>Zn(2+)</name>
        <dbReference type="ChEBI" id="CHEBI:29105"/>
        <note>catalytic</note>
    </ligand>
</feature>
<protein>
    <recommendedName>
        <fullName evidence="1">Endoribonuclease YbeY</fullName>
        <ecNumber evidence="1">3.1.-.-</ecNumber>
    </recommendedName>
</protein>